<keyword id="KW-0002">3D-structure</keyword>
<keyword id="KW-0963">Cytoplasm</keyword>
<keyword id="KW-0903">Direct protein sequencing</keyword>
<keyword id="KW-0349">Heme</keyword>
<keyword id="KW-0408">Iron</keyword>
<keyword id="KW-0479">Metal-binding</keyword>
<keyword id="KW-0503">Monooxygenase</keyword>
<keyword id="KW-0560">Oxidoreductase</keyword>
<sequence>MTTETIQSNANLAPLPPHVPEHLVFDFDMYNPSNLSAGVQEAWAVLQESNVPDLVWTRCNGGHWIATRGQLIREAYEDYRHFSSECPFIPREAGEAYDFIPTSMDPPEQRQFRALANQVVGMPVVDKLENRIQELACSLIESLRPQGQCNFTEDYAEPFPIRIFMLLAGLPEEDIPHLKYLTDQMTRPDGSMTFAEAKEALYDYLIPIIEQRRQKPGTDAISIVANGQVNGRPITSDEAKRMCGLLLVGGLDTVVNFLSFSMEFLAKSPEHRQELIERPERIPAACEELLRRFSLVADGRILTSDYEFHGVQLKKGDQILLPQMLSGLDERENACPMHVDFSRQKVSHTTFGHGSHLCLGQHLARREIIVTLKEWLTRIPDFSIAPGAQIQHKSGIVSGVQALPLVWDPATTKAV</sequence>
<dbReference type="EC" id="1.14.15.1"/>
<dbReference type="EMBL" id="M12546">
    <property type="protein sequence ID" value="AAA25760.1"/>
    <property type="molecule type" value="Genomic_DNA"/>
</dbReference>
<dbReference type="EMBL" id="D00528">
    <property type="protein sequence ID" value="BAA00412.1"/>
    <property type="molecule type" value="Genomic_DNA"/>
</dbReference>
<dbReference type="PIR" id="A25660">
    <property type="entry name" value="O4PSCP"/>
</dbReference>
<dbReference type="PDB" id="1AKD">
    <property type="method" value="X-ray"/>
    <property type="resolution" value="1.80 A"/>
    <property type="chains" value="A=2-415"/>
</dbReference>
<dbReference type="PDB" id="1C8J">
    <property type="method" value="X-ray"/>
    <property type="resolution" value="2.10 A"/>
    <property type="chains" value="A/B=2-415"/>
</dbReference>
<dbReference type="PDB" id="1CP4">
    <property type="method" value="X-ray"/>
    <property type="resolution" value="1.90 A"/>
    <property type="chains" value="A=2-415"/>
</dbReference>
<dbReference type="PDB" id="1DZ4">
    <property type="method" value="X-ray"/>
    <property type="resolution" value="1.60 A"/>
    <property type="chains" value="A/B=2-415"/>
</dbReference>
<dbReference type="PDB" id="1DZ6">
    <property type="method" value="X-ray"/>
    <property type="resolution" value="1.90 A"/>
    <property type="chains" value="A/B=2-415"/>
</dbReference>
<dbReference type="PDB" id="1DZ8">
    <property type="method" value="X-ray"/>
    <property type="resolution" value="1.90 A"/>
    <property type="chains" value="A/B=2-415"/>
</dbReference>
<dbReference type="PDB" id="1DZ9">
    <property type="method" value="X-ray"/>
    <property type="resolution" value="1.90 A"/>
    <property type="chains" value="A/B=2-415"/>
</dbReference>
<dbReference type="PDB" id="1GEB">
    <property type="method" value="X-ray"/>
    <property type="resolution" value="2.03 A"/>
    <property type="chains" value="A=1-415"/>
</dbReference>
<dbReference type="PDB" id="1GEK">
    <property type="method" value="X-ray"/>
    <property type="resolution" value="1.70 A"/>
    <property type="chains" value="A=1-415"/>
</dbReference>
<dbReference type="PDB" id="1GEM">
    <property type="method" value="X-ray"/>
    <property type="resolution" value="2.00 A"/>
    <property type="chains" value="A=1-415"/>
</dbReference>
<dbReference type="PDB" id="1GJM">
    <property type="method" value="X-ray"/>
    <property type="resolution" value="2.20 A"/>
    <property type="chains" value="A=2-415"/>
</dbReference>
<dbReference type="PDB" id="1IWI">
    <property type="method" value="X-ray"/>
    <property type="resolution" value="2.00 A"/>
    <property type="chains" value="A=1-415"/>
</dbReference>
<dbReference type="PDB" id="1IWJ">
    <property type="method" value="X-ray"/>
    <property type="resolution" value="2.00 A"/>
    <property type="chains" value="A=1-415"/>
</dbReference>
<dbReference type="PDB" id="1IWK">
    <property type="method" value="X-ray"/>
    <property type="resolution" value="2.00 A"/>
    <property type="chains" value="A=1-415"/>
</dbReference>
<dbReference type="PDB" id="1J51">
    <property type="method" value="X-ray"/>
    <property type="resolution" value="2.20 A"/>
    <property type="chains" value="A/B/C/D=2-415"/>
</dbReference>
<dbReference type="PDB" id="1K2O">
    <property type="method" value="X-ray"/>
    <property type="resolution" value="1.65 A"/>
    <property type="chains" value="A/B=2-415"/>
</dbReference>
<dbReference type="PDB" id="1LWL">
    <property type="method" value="X-ray"/>
    <property type="resolution" value="2.20 A"/>
    <property type="chains" value="A=1-415"/>
</dbReference>
<dbReference type="PDB" id="1MPW">
    <property type="method" value="X-ray"/>
    <property type="resolution" value="2.34 A"/>
    <property type="chains" value="A/B=2-415"/>
</dbReference>
<dbReference type="PDB" id="1NOO">
    <property type="method" value="X-ray"/>
    <property type="resolution" value="2.20 A"/>
    <property type="chains" value="A=2-415"/>
</dbReference>
<dbReference type="PDB" id="1O76">
    <property type="method" value="X-ray"/>
    <property type="resolution" value="1.80 A"/>
    <property type="chains" value="A/B=2-415"/>
</dbReference>
<dbReference type="PDB" id="1P2Y">
    <property type="method" value="X-ray"/>
    <property type="resolution" value="2.30 A"/>
    <property type="chains" value="A=2-415"/>
</dbReference>
<dbReference type="PDB" id="1P7R">
    <property type="method" value="X-ray"/>
    <property type="resolution" value="2.85 A"/>
    <property type="chains" value="A=2-415"/>
</dbReference>
<dbReference type="PDB" id="1PHA">
    <property type="method" value="X-ray"/>
    <property type="resolution" value="1.63 A"/>
    <property type="chains" value="A=2-415"/>
</dbReference>
<dbReference type="PDB" id="1PHB">
    <property type="method" value="X-ray"/>
    <property type="resolution" value="1.60 A"/>
    <property type="chains" value="A=2-415"/>
</dbReference>
<dbReference type="PDB" id="1PHC">
    <property type="method" value="X-ray"/>
    <property type="resolution" value="1.60 A"/>
    <property type="chains" value="A=2-415"/>
</dbReference>
<dbReference type="PDB" id="1PHD">
    <property type="method" value="X-ray"/>
    <property type="resolution" value="1.60 A"/>
    <property type="chains" value="A=2-415"/>
</dbReference>
<dbReference type="PDB" id="1PHE">
    <property type="method" value="X-ray"/>
    <property type="resolution" value="1.60 A"/>
    <property type="chains" value="A=2-415"/>
</dbReference>
<dbReference type="PDB" id="1PHF">
    <property type="method" value="X-ray"/>
    <property type="resolution" value="1.60 A"/>
    <property type="chains" value="A=2-415"/>
</dbReference>
<dbReference type="PDB" id="1PHG">
    <property type="method" value="X-ray"/>
    <property type="resolution" value="1.60 A"/>
    <property type="chains" value="A=2-415"/>
</dbReference>
<dbReference type="PDB" id="1QMQ">
    <property type="method" value="X-ray"/>
    <property type="resolution" value="1.55 A"/>
    <property type="chains" value="A=2-415"/>
</dbReference>
<dbReference type="PDB" id="1RE9">
    <property type="method" value="X-ray"/>
    <property type="resolution" value="1.45 A"/>
    <property type="chains" value="A=2-415"/>
</dbReference>
<dbReference type="PDB" id="1RF9">
    <property type="method" value="X-ray"/>
    <property type="resolution" value="1.80 A"/>
    <property type="chains" value="A=1-415"/>
</dbReference>
<dbReference type="PDB" id="1T85">
    <property type="method" value="X-ray"/>
    <property type="resolution" value="1.80 A"/>
    <property type="chains" value="A=2-415"/>
</dbReference>
<dbReference type="PDB" id="1T86">
    <property type="method" value="X-ray"/>
    <property type="resolution" value="1.90 A"/>
    <property type="chains" value="A/B=2-415"/>
</dbReference>
<dbReference type="PDB" id="1T87">
    <property type="method" value="X-ray"/>
    <property type="resolution" value="1.80 A"/>
    <property type="chains" value="A/B=2-415"/>
</dbReference>
<dbReference type="PDB" id="1T88">
    <property type="method" value="X-ray"/>
    <property type="resolution" value="1.90 A"/>
    <property type="chains" value="A/B=2-415"/>
</dbReference>
<dbReference type="PDB" id="1UYU">
    <property type="method" value="X-ray"/>
    <property type="resolution" value="2.00 A"/>
    <property type="chains" value="A/B=2-415"/>
</dbReference>
<dbReference type="PDB" id="1YRC">
    <property type="method" value="X-ray"/>
    <property type="resolution" value="1.40 A"/>
    <property type="chains" value="A=2-415"/>
</dbReference>
<dbReference type="PDB" id="1YRD">
    <property type="method" value="X-ray"/>
    <property type="resolution" value="1.70 A"/>
    <property type="chains" value="A=2-415"/>
</dbReference>
<dbReference type="PDB" id="2A1M">
    <property type="method" value="X-ray"/>
    <property type="resolution" value="2.10 A"/>
    <property type="chains" value="A/B=1-415"/>
</dbReference>
<dbReference type="PDB" id="2A1N">
    <property type="method" value="X-ray"/>
    <property type="resolution" value="1.90 A"/>
    <property type="chains" value="A/B=1-415"/>
</dbReference>
<dbReference type="PDB" id="2A1O">
    <property type="method" value="X-ray"/>
    <property type="resolution" value="1.55 A"/>
    <property type="chains" value="A/B=1-415"/>
</dbReference>
<dbReference type="PDB" id="2CP4">
    <property type="method" value="X-ray"/>
    <property type="resolution" value="2.10 A"/>
    <property type="chains" value="A=2-415"/>
</dbReference>
<dbReference type="PDB" id="2CPP">
    <property type="method" value="X-ray"/>
    <property type="resolution" value="1.63 A"/>
    <property type="chains" value="A=2-415"/>
</dbReference>
<dbReference type="PDB" id="2FE6">
    <property type="method" value="X-ray"/>
    <property type="resolution" value="1.50 A"/>
    <property type="chains" value="A=1-415"/>
</dbReference>
<dbReference type="PDB" id="2FER">
    <property type="method" value="X-ray"/>
    <property type="resolution" value="1.70 A"/>
    <property type="chains" value="A=11-415"/>
</dbReference>
<dbReference type="PDB" id="2FEU">
    <property type="method" value="X-ray"/>
    <property type="resolution" value="1.70 A"/>
    <property type="chains" value="A/B=11-415"/>
</dbReference>
<dbReference type="PDB" id="2FRZ">
    <property type="method" value="X-ray"/>
    <property type="resolution" value="2.10 A"/>
    <property type="chains" value="A/B=2-415"/>
</dbReference>
<dbReference type="PDB" id="2GQX">
    <property type="method" value="X-ray"/>
    <property type="resolution" value="2.10 A"/>
    <property type="chains" value="A/B=11-415"/>
</dbReference>
<dbReference type="PDB" id="2GR6">
    <property type="method" value="X-ray"/>
    <property type="resolution" value="2.30 A"/>
    <property type="chains" value="A/B=11-415"/>
</dbReference>
<dbReference type="PDB" id="2H7Q">
    <property type="method" value="X-ray"/>
    <property type="resolution" value="1.50 A"/>
    <property type="chains" value="A=2-415"/>
</dbReference>
<dbReference type="PDB" id="2H7R">
    <property type="method" value="X-ray"/>
    <property type="resolution" value="2.10 A"/>
    <property type="chains" value="A=2-415"/>
</dbReference>
<dbReference type="PDB" id="2H7S">
    <property type="method" value="X-ray"/>
    <property type="resolution" value="2.15 A"/>
    <property type="chains" value="A/C=2-415"/>
</dbReference>
<dbReference type="PDB" id="2L8M">
    <property type="method" value="NMR"/>
    <property type="chains" value="A=1-415"/>
</dbReference>
<dbReference type="PDB" id="2LQD">
    <property type="method" value="NMR"/>
    <property type="chains" value="A=3-415"/>
</dbReference>
<dbReference type="PDB" id="2M56">
    <property type="method" value="NMR"/>
    <property type="chains" value="A=12-415"/>
</dbReference>
<dbReference type="PDB" id="2QBL">
    <property type="method" value="X-ray"/>
    <property type="resolution" value="1.80 A"/>
    <property type="chains" value="A=1-415"/>
</dbReference>
<dbReference type="PDB" id="2QBM">
    <property type="method" value="X-ray"/>
    <property type="resolution" value="1.80 A"/>
    <property type="chains" value="A=1-415"/>
</dbReference>
<dbReference type="PDB" id="2QBN">
    <property type="method" value="X-ray"/>
    <property type="resolution" value="1.75 A"/>
    <property type="chains" value="A=1-415"/>
</dbReference>
<dbReference type="PDB" id="2QBO">
    <property type="method" value="X-ray"/>
    <property type="resolution" value="1.90 A"/>
    <property type="chains" value="A=1-415"/>
</dbReference>
<dbReference type="PDB" id="2Z97">
    <property type="method" value="X-ray"/>
    <property type="resolution" value="1.80 A"/>
    <property type="chains" value="A=1-415"/>
</dbReference>
<dbReference type="PDB" id="2ZAW">
    <property type="method" value="X-ray"/>
    <property type="resolution" value="1.55 A"/>
    <property type="chains" value="A=1-415"/>
</dbReference>
<dbReference type="PDB" id="2ZAX">
    <property type="method" value="X-ray"/>
    <property type="resolution" value="1.60 A"/>
    <property type="chains" value="A=1-415"/>
</dbReference>
<dbReference type="PDB" id="2ZUH">
    <property type="method" value="X-ray"/>
    <property type="resolution" value="1.55 A"/>
    <property type="chains" value="A=1-415"/>
</dbReference>
<dbReference type="PDB" id="2ZUI">
    <property type="method" value="X-ray"/>
    <property type="resolution" value="1.50 A"/>
    <property type="chains" value="A=1-415"/>
</dbReference>
<dbReference type="PDB" id="2ZUJ">
    <property type="method" value="X-ray"/>
    <property type="resolution" value="1.60 A"/>
    <property type="chains" value="A=1-415"/>
</dbReference>
<dbReference type="PDB" id="2ZWT">
    <property type="method" value="X-ray"/>
    <property type="resolution" value="1.35 A"/>
    <property type="chains" value="A=1-415"/>
</dbReference>
<dbReference type="PDB" id="2ZWU">
    <property type="method" value="X-ray"/>
    <property type="resolution" value="1.30 A"/>
    <property type="chains" value="A=1-415"/>
</dbReference>
<dbReference type="PDB" id="3CP4">
    <property type="method" value="X-ray"/>
    <property type="resolution" value="2.30 A"/>
    <property type="chains" value="A=2-415"/>
</dbReference>
<dbReference type="PDB" id="3CPP">
    <property type="method" value="X-ray"/>
    <property type="resolution" value="1.90 A"/>
    <property type="chains" value="A=2-415"/>
</dbReference>
<dbReference type="PDB" id="3FWF">
    <property type="method" value="X-ray"/>
    <property type="resolution" value="1.83 A"/>
    <property type="chains" value="A/B=11-415"/>
</dbReference>
<dbReference type="PDB" id="3FWG">
    <property type="method" value="X-ray"/>
    <property type="resolution" value="1.55 A"/>
    <property type="chains" value="A/B=11-415"/>
</dbReference>
<dbReference type="PDB" id="3FWI">
    <property type="method" value="X-ray"/>
    <property type="resolution" value="2.40 A"/>
    <property type="chains" value="A=11-415"/>
</dbReference>
<dbReference type="PDB" id="3FWJ">
    <property type="method" value="X-ray"/>
    <property type="resolution" value="1.90 A"/>
    <property type="chains" value="A=11-415"/>
</dbReference>
<dbReference type="PDB" id="3L61">
    <property type="method" value="X-ray"/>
    <property type="resolution" value="1.50 A"/>
    <property type="chains" value="A=2-415"/>
</dbReference>
<dbReference type="PDB" id="3L62">
    <property type="method" value="X-ray"/>
    <property type="resolution" value="1.70 A"/>
    <property type="chains" value="A=2-415"/>
</dbReference>
<dbReference type="PDB" id="3L63">
    <property type="method" value="X-ray"/>
    <property type="resolution" value="1.50 A"/>
    <property type="chains" value="A=2-415"/>
</dbReference>
<dbReference type="PDB" id="3OIA">
    <property type="method" value="X-ray"/>
    <property type="resolution" value="1.65 A"/>
    <property type="chains" value="A=2-415"/>
</dbReference>
<dbReference type="PDB" id="3OL5">
    <property type="method" value="X-ray"/>
    <property type="resolution" value="1.75 A"/>
    <property type="chains" value="A=2-415"/>
</dbReference>
<dbReference type="PDB" id="3P6M">
    <property type="method" value="X-ray"/>
    <property type="resolution" value="2.00 A"/>
    <property type="chains" value="A=2-415"/>
</dbReference>
<dbReference type="PDB" id="3P6N">
    <property type="method" value="X-ray"/>
    <property type="resolution" value="1.70 A"/>
    <property type="chains" value="A=2-415"/>
</dbReference>
<dbReference type="PDB" id="3P6O">
    <property type="method" value="X-ray"/>
    <property type="resolution" value="2.00 A"/>
    <property type="chains" value="A=2-415"/>
</dbReference>
<dbReference type="PDB" id="3P6P">
    <property type="method" value="X-ray"/>
    <property type="resolution" value="1.90 A"/>
    <property type="chains" value="A=2-415"/>
</dbReference>
<dbReference type="PDB" id="3P6Q">
    <property type="method" value="X-ray"/>
    <property type="resolution" value="1.95 A"/>
    <property type="chains" value="A=2-415"/>
</dbReference>
<dbReference type="PDB" id="3P6R">
    <property type="method" value="X-ray"/>
    <property type="resolution" value="2.10 A"/>
    <property type="chains" value="A=2-415"/>
</dbReference>
<dbReference type="PDB" id="3P6S">
    <property type="method" value="X-ray"/>
    <property type="resolution" value="2.00 A"/>
    <property type="chains" value="A=2-415"/>
</dbReference>
<dbReference type="PDB" id="3P6T">
    <property type="method" value="X-ray"/>
    <property type="resolution" value="1.90 A"/>
    <property type="chains" value="A=2-415"/>
</dbReference>
<dbReference type="PDB" id="3P6U">
    <property type="method" value="X-ray"/>
    <property type="resolution" value="1.70 A"/>
    <property type="chains" value="A=2-415"/>
</dbReference>
<dbReference type="PDB" id="3P6V">
    <property type="method" value="X-ray"/>
    <property type="resolution" value="2.00 A"/>
    <property type="chains" value="A=2-415"/>
</dbReference>
<dbReference type="PDB" id="3P6W">
    <property type="method" value="X-ray"/>
    <property type="resolution" value="2.10 A"/>
    <property type="chains" value="A=2-415"/>
</dbReference>
<dbReference type="PDB" id="3P6X">
    <property type="method" value="X-ray"/>
    <property type="resolution" value="1.65 A"/>
    <property type="chains" value="A=2-415"/>
</dbReference>
<dbReference type="PDB" id="3W9C">
    <property type="method" value="X-ray"/>
    <property type="resolution" value="2.50 A"/>
    <property type="chains" value="A=2-415"/>
</dbReference>
<dbReference type="PDB" id="3WRH">
    <property type="method" value="X-ray"/>
    <property type="resolution" value="1.62 A"/>
    <property type="chains" value="A/E=1-415"/>
</dbReference>
<dbReference type="PDB" id="3WRI">
    <property type="method" value="X-ray"/>
    <property type="resolution" value="2.90 A"/>
    <property type="chains" value="A/B=1-415"/>
</dbReference>
<dbReference type="PDB" id="3WRJ">
    <property type="method" value="X-ray"/>
    <property type="resolution" value="1.85 A"/>
    <property type="chains" value="A/E=1-415"/>
</dbReference>
<dbReference type="PDB" id="3WRK">
    <property type="method" value="X-ray"/>
    <property type="resolution" value="2.61 A"/>
    <property type="chains" value="A/D=1-415"/>
</dbReference>
<dbReference type="PDB" id="3WRL">
    <property type="method" value="X-ray"/>
    <property type="resolution" value="1.65 A"/>
    <property type="chains" value="A/E=1-415"/>
</dbReference>
<dbReference type="PDB" id="3WRM">
    <property type="method" value="X-ray"/>
    <property type="resolution" value="1.95 A"/>
    <property type="chains" value="A/F=1-415"/>
</dbReference>
<dbReference type="PDB" id="4CP4">
    <property type="method" value="X-ray"/>
    <property type="resolution" value="2.10 A"/>
    <property type="chains" value="A=2-415"/>
</dbReference>
<dbReference type="PDB" id="4CPP">
    <property type="method" value="X-ray"/>
    <property type="resolution" value="2.11 A"/>
    <property type="chains" value="A=2-415"/>
</dbReference>
<dbReference type="PDB" id="4EK1">
    <property type="method" value="X-ray"/>
    <property type="resolution" value="1.97 A"/>
    <property type="chains" value="A/B=2-415"/>
</dbReference>
<dbReference type="PDB" id="4G3R">
    <property type="method" value="X-ray"/>
    <property type="resolution" value="2.20 A"/>
    <property type="chains" value="A/B=2-415"/>
</dbReference>
<dbReference type="PDB" id="4JWS">
    <property type="method" value="X-ray"/>
    <property type="resolution" value="2.15 A"/>
    <property type="chains" value="A/B=1-415"/>
</dbReference>
<dbReference type="PDB" id="4JWU">
    <property type="method" value="X-ray"/>
    <property type="resolution" value="2.20 A"/>
    <property type="chains" value="A/B=1-415"/>
</dbReference>
<dbReference type="PDB" id="4JX1">
    <property type="method" value="X-ray"/>
    <property type="resolution" value="2.09 A"/>
    <property type="chains" value="A/B/E/F=1-415"/>
</dbReference>
<dbReference type="PDB" id="4KKY">
    <property type="method" value="X-ray"/>
    <property type="resolution" value="2.00 A"/>
    <property type="chains" value="X=2-414"/>
</dbReference>
<dbReference type="PDB" id="4L49">
    <property type="method" value="X-ray"/>
    <property type="resolution" value="2.13 A"/>
    <property type="chains" value="A=1-415"/>
</dbReference>
<dbReference type="PDB" id="4L4A">
    <property type="method" value="X-ray"/>
    <property type="resolution" value="2.10 A"/>
    <property type="chains" value="A=1-415"/>
</dbReference>
<dbReference type="PDB" id="4L4B">
    <property type="method" value="X-ray"/>
    <property type="resolution" value="2.10 A"/>
    <property type="chains" value="A=1-415"/>
</dbReference>
<dbReference type="PDB" id="4L4C">
    <property type="method" value="X-ray"/>
    <property type="resolution" value="2.20 A"/>
    <property type="chains" value="A/B=1-415"/>
</dbReference>
<dbReference type="PDB" id="4L4D">
    <property type="method" value="X-ray"/>
    <property type="resolution" value="2.10 A"/>
    <property type="chains" value="A=1-415"/>
</dbReference>
<dbReference type="PDB" id="4L4E">
    <property type="method" value="X-ray"/>
    <property type="resolution" value="1.26 A"/>
    <property type="chains" value="A=1-415"/>
</dbReference>
<dbReference type="PDB" id="4L4F">
    <property type="method" value="X-ray"/>
    <property type="resolution" value="1.29 A"/>
    <property type="chains" value="A=1-415"/>
</dbReference>
<dbReference type="PDB" id="4L4G">
    <property type="method" value="X-ray"/>
    <property type="resolution" value="1.55 A"/>
    <property type="chains" value="A=1-415"/>
</dbReference>
<dbReference type="PDB" id="5CP4">
    <property type="method" value="X-ray"/>
    <property type="resolution" value="1.75 A"/>
    <property type="chains" value="A=2-415"/>
</dbReference>
<dbReference type="PDB" id="5CPP">
    <property type="method" value="X-ray"/>
    <property type="resolution" value="2.08 A"/>
    <property type="chains" value="A=2-415"/>
</dbReference>
<dbReference type="PDB" id="5GXG">
    <property type="method" value="X-ray"/>
    <property type="resolution" value="1.70 A"/>
    <property type="chains" value="A=2-415"/>
</dbReference>
<dbReference type="PDB" id="5IK1">
    <property type="method" value="X-ray"/>
    <property type="resolution" value="1.53 A"/>
    <property type="chains" value="A=10-415"/>
</dbReference>
<dbReference type="PDB" id="5WK7">
    <property type="method" value="X-ray"/>
    <property type="resolution" value="1.98 A"/>
    <property type="chains" value="A=1-415"/>
</dbReference>
<dbReference type="PDB" id="5WK9">
    <property type="method" value="X-ray"/>
    <property type="resolution" value="1.98 A"/>
    <property type="chains" value="A=1-415"/>
</dbReference>
<dbReference type="PDB" id="6CP4">
    <property type="method" value="X-ray"/>
    <property type="resolution" value="1.90 A"/>
    <property type="chains" value="A=2-415"/>
</dbReference>
<dbReference type="PDB" id="6CPP">
    <property type="method" value="X-ray"/>
    <property type="resolution" value="1.90 A"/>
    <property type="chains" value="A=2-415"/>
</dbReference>
<dbReference type="PDB" id="6NBL">
    <property type="method" value="X-ray"/>
    <property type="resolution" value="2.15 A"/>
    <property type="chains" value="A/B=1-415"/>
</dbReference>
<dbReference type="PDB" id="6WE6">
    <property type="method" value="X-ray"/>
    <property type="resolution" value="2.16 A"/>
    <property type="chains" value="A/B=1-415"/>
</dbReference>
<dbReference type="PDB" id="6WFL">
    <property type="method" value="X-ray"/>
    <property type="resolution" value="1.60 A"/>
    <property type="chains" value="A=1-415"/>
</dbReference>
<dbReference type="PDB" id="7CPP">
    <property type="method" value="X-ray"/>
    <property type="resolution" value="2.00 A"/>
    <property type="chains" value="A=2-415"/>
</dbReference>
<dbReference type="PDB" id="8CPP">
    <property type="method" value="X-ray"/>
    <property type="resolution" value="2.10 A"/>
    <property type="chains" value="A=2-415"/>
</dbReference>
<dbReference type="PDBsum" id="1AKD"/>
<dbReference type="PDBsum" id="1C8J"/>
<dbReference type="PDBsum" id="1CP4"/>
<dbReference type="PDBsum" id="1DZ4"/>
<dbReference type="PDBsum" id="1DZ6"/>
<dbReference type="PDBsum" id="1DZ8"/>
<dbReference type="PDBsum" id="1DZ9"/>
<dbReference type="PDBsum" id="1GEB"/>
<dbReference type="PDBsum" id="1GEK"/>
<dbReference type="PDBsum" id="1GEM"/>
<dbReference type="PDBsum" id="1GJM"/>
<dbReference type="PDBsum" id="1IWI"/>
<dbReference type="PDBsum" id="1IWJ"/>
<dbReference type="PDBsum" id="1IWK"/>
<dbReference type="PDBsum" id="1J51"/>
<dbReference type="PDBsum" id="1K2O"/>
<dbReference type="PDBsum" id="1LWL"/>
<dbReference type="PDBsum" id="1MPW"/>
<dbReference type="PDBsum" id="1NOO"/>
<dbReference type="PDBsum" id="1O76"/>
<dbReference type="PDBsum" id="1P2Y"/>
<dbReference type="PDBsum" id="1P7R"/>
<dbReference type="PDBsum" id="1PHA"/>
<dbReference type="PDBsum" id="1PHB"/>
<dbReference type="PDBsum" id="1PHC"/>
<dbReference type="PDBsum" id="1PHD"/>
<dbReference type="PDBsum" id="1PHE"/>
<dbReference type="PDBsum" id="1PHF"/>
<dbReference type="PDBsum" id="1PHG"/>
<dbReference type="PDBsum" id="1QMQ"/>
<dbReference type="PDBsum" id="1RE9"/>
<dbReference type="PDBsum" id="1RF9"/>
<dbReference type="PDBsum" id="1T85"/>
<dbReference type="PDBsum" id="1T86"/>
<dbReference type="PDBsum" id="1T87"/>
<dbReference type="PDBsum" id="1T88"/>
<dbReference type="PDBsum" id="1UYU"/>
<dbReference type="PDBsum" id="1YRC"/>
<dbReference type="PDBsum" id="1YRD"/>
<dbReference type="PDBsum" id="2A1M"/>
<dbReference type="PDBsum" id="2A1N"/>
<dbReference type="PDBsum" id="2A1O"/>
<dbReference type="PDBsum" id="2CP4"/>
<dbReference type="PDBsum" id="2CPP"/>
<dbReference type="PDBsum" id="2FE6"/>
<dbReference type="PDBsum" id="2FER"/>
<dbReference type="PDBsum" id="2FEU"/>
<dbReference type="PDBsum" id="2FRZ"/>
<dbReference type="PDBsum" id="2GQX"/>
<dbReference type="PDBsum" id="2GR6"/>
<dbReference type="PDBsum" id="2H7Q"/>
<dbReference type="PDBsum" id="2H7R"/>
<dbReference type="PDBsum" id="2H7S"/>
<dbReference type="PDBsum" id="2L8M"/>
<dbReference type="PDBsum" id="2LQD"/>
<dbReference type="PDBsum" id="2M56"/>
<dbReference type="PDBsum" id="2QBL"/>
<dbReference type="PDBsum" id="2QBM"/>
<dbReference type="PDBsum" id="2QBN"/>
<dbReference type="PDBsum" id="2QBO"/>
<dbReference type="PDBsum" id="2Z97"/>
<dbReference type="PDBsum" id="2ZAW"/>
<dbReference type="PDBsum" id="2ZAX"/>
<dbReference type="PDBsum" id="2ZUH"/>
<dbReference type="PDBsum" id="2ZUI"/>
<dbReference type="PDBsum" id="2ZUJ"/>
<dbReference type="PDBsum" id="2ZWT"/>
<dbReference type="PDBsum" id="2ZWU"/>
<dbReference type="PDBsum" id="3CP4"/>
<dbReference type="PDBsum" id="3CPP"/>
<dbReference type="PDBsum" id="3FWF"/>
<dbReference type="PDBsum" id="3FWG"/>
<dbReference type="PDBsum" id="3FWI"/>
<dbReference type="PDBsum" id="3FWJ"/>
<dbReference type="PDBsum" id="3L61"/>
<dbReference type="PDBsum" id="3L62"/>
<dbReference type="PDBsum" id="3L63"/>
<dbReference type="PDBsum" id="3OIA"/>
<dbReference type="PDBsum" id="3OL5"/>
<dbReference type="PDBsum" id="3P6M"/>
<dbReference type="PDBsum" id="3P6N"/>
<dbReference type="PDBsum" id="3P6O"/>
<dbReference type="PDBsum" id="3P6P"/>
<dbReference type="PDBsum" id="3P6Q"/>
<dbReference type="PDBsum" id="3P6R"/>
<dbReference type="PDBsum" id="3P6S"/>
<dbReference type="PDBsum" id="3P6T"/>
<dbReference type="PDBsum" id="3P6U"/>
<dbReference type="PDBsum" id="3P6V"/>
<dbReference type="PDBsum" id="3P6W"/>
<dbReference type="PDBsum" id="3P6X"/>
<dbReference type="PDBsum" id="3W9C"/>
<dbReference type="PDBsum" id="3WRH"/>
<dbReference type="PDBsum" id="3WRI"/>
<dbReference type="PDBsum" id="3WRJ"/>
<dbReference type="PDBsum" id="3WRK"/>
<dbReference type="PDBsum" id="3WRL"/>
<dbReference type="PDBsum" id="3WRM"/>
<dbReference type="PDBsum" id="4CP4"/>
<dbReference type="PDBsum" id="4CPP"/>
<dbReference type="PDBsum" id="4EK1"/>
<dbReference type="PDBsum" id="4G3R"/>
<dbReference type="PDBsum" id="4JWS"/>
<dbReference type="PDBsum" id="4JWU"/>
<dbReference type="PDBsum" id="4JX1"/>
<dbReference type="PDBsum" id="4KKY"/>
<dbReference type="PDBsum" id="4L49"/>
<dbReference type="PDBsum" id="4L4A"/>
<dbReference type="PDBsum" id="4L4B"/>
<dbReference type="PDBsum" id="4L4C"/>
<dbReference type="PDBsum" id="4L4D"/>
<dbReference type="PDBsum" id="4L4E"/>
<dbReference type="PDBsum" id="4L4F"/>
<dbReference type="PDBsum" id="4L4G"/>
<dbReference type="PDBsum" id="5CP4"/>
<dbReference type="PDBsum" id="5CPP"/>
<dbReference type="PDBsum" id="5GXG"/>
<dbReference type="PDBsum" id="5IK1"/>
<dbReference type="PDBsum" id="5WK7"/>
<dbReference type="PDBsum" id="5WK9"/>
<dbReference type="PDBsum" id="6CP4"/>
<dbReference type="PDBsum" id="6CPP"/>
<dbReference type="PDBsum" id="6NBL"/>
<dbReference type="PDBsum" id="6WE6"/>
<dbReference type="PDBsum" id="6WFL"/>
<dbReference type="PDBsum" id="7CPP"/>
<dbReference type="PDBsum" id="8CPP"/>
<dbReference type="BMRB" id="P00183"/>
<dbReference type="SMR" id="P00183"/>
<dbReference type="DIP" id="DIP-29809N"/>
<dbReference type="IntAct" id="P00183">
    <property type="interactions" value="1"/>
</dbReference>
<dbReference type="BindingDB" id="P00183"/>
<dbReference type="ChEMBL" id="CHEMBL5594"/>
<dbReference type="DrugBank" id="DB03836">
    <property type="generic name" value="1,3,5-trichlorobenzene"/>
</dbReference>
<dbReference type="DrugBank" id="DB02617">
    <property type="generic name" value="1-(N-Imidazolyl)-2-Hydroxy-2-(2,3-Dichlorophenyl)Octane"/>
</dbReference>
<dbReference type="DrugBank" id="DB02817">
    <property type="generic name" value="5-Exo-Hydroxycamphor"/>
</dbReference>
<dbReference type="DrugBank" id="DB03627">
    <property type="generic name" value="Adamantane"/>
</dbReference>
<dbReference type="DrugBank" id="DB04032">
    <property type="generic name" value="Adamantane-1-Carboxylic Acid-5-Dimethylamino-Naphthalene-1-Sulfonylamino-Butyl-Amide"/>
</dbReference>
<dbReference type="DrugBank" id="DB03031">
    <property type="generic name" value="Adamantane-1-Carboxylic Acid-5-Dimethylamino-Naphthalene-1-Sulfonylamino-Octyl-Amide"/>
</dbReference>
<dbReference type="DrugBank" id="DB02125">
    <property type="generic name" value="Adamantanone"/>
</dbReference>
<dbReference type="DrugBank" id="DB04501">
    <property type="generic name" value="Camphane"/>
</dbReference>
<dbReference type="DrugBank" id="DB01744">
    <property type="generic name" value="Camphor"/>
</dbReference>
<dbReference type="DrugBank" id="DB01663">
    <property type="generic name" value="lambda-bis(2,2'-bipyridine)-(5-methyl-2-2'-bipyridine)-C9-adamantane ruthenium (II)"/>
</dbReference>
<dbReference type="DrugBank" id="DB01011">
    <property type="generic name" value="Metyrapone"/>
</dbReference>
<dbReference type="DrugBank" id="DB01703">
    <property type="generic name" value="N-(2-ferrocenylethyl)maleimide"/>
</dbReference>
<dbReference type="DrugBank" id="DB01826">
    <property type="generic name" value="N-Butyl Isocyanide"/>
</dbReference>
<dbReference type="DrugBank" id="DB03540">
    <property type="generic name" value="Norcamphor"/>
</dbReference>
<dbReference type="DrugBank" id="DB02851">
    <property type="generic name" value="Thiocamphor"/>
</dbReference>
<dbReference type="KEGG" id="ag:AAA25760"/>
<dbReference type="BioCyc" id="MetaCyc:MONOMER-3021"/>
<dbReference type="BRENDA" id="1.14.15.1">
    <property type="organism ID" value="5092"/>
</dbReference>
<dbReference type="UniPathway" id="UPA00719"/>
<dbReference type="EvolutionaryTrace" id="P00183"/>
<dbReference type="GO" id="GO:0005737">
    <property type="term" value="C:cytoplasm"/>
    <property type="evidence" value="ECO:0007669"/>
    <property type="project" value="UniProtKB-SubCell"/>
</dbReference>
<dbReference type="GO" id="GO:0018683">
    <property type="term" value="F:camphor 5-monooxygenase activity"/>
    <property type="evidence" value="ECO:0007669"/>
    <property type="project" value="UniProtKB-EC"/>
</dbReference>
<dbReference type="GO" id="GO:0020037">
    <property type="term" value="F:heme binding"/>
    <property type="evidence" value="ECO:0007669"/>
    <property type="project" value="InterPro"/>
</dbReference>
<dbReference type="GO" id="GO:0005506">
    <property type="term" value="F:iron ion binding"/>
    <property type="evidence" value="ECO:0007669"/>
    <property type="project" value="InterPro"/>
</dbReference>
<dbReference type="GO" id="GO:0019383">
    <property type="term" value="P:(+)-camphor catabolic process"/>
    <property type="evidence" value="ECO:0007669"/>
    <property type="project" value="UniProtKB-UniPathway"/>
</dbReference>
<dbReference type="CDD" id="cd11035">
    <property type="entry name" value="P450cam-like"/>
    <property type="match status" value="1"/>
</dbReference>
<dbReference type="Gene3D" id="1.10.630.10">
    <property type="entry name" value="Cytochrome P450"/>
    <property type="match status" value="1"/>
</dbReference>
<dbReference type="InterPro" id="IPR001128">
    <property type="entry name" value="Cyt_P450"/>
</dbReference>
<dbReference type="InterPro" id="IPR002397">
    <property type="entry name" value="Cyt_P450_B"/>
</dbReference>
<dbReference type="InterPro" id="IPR017972">
    <property type="entry name" value="Cyt_P450_CS"/>
</dbReference>
<dbReference type="InterPro" id="IPR036396">
    <property type="entry name" value="Cyt_P450_sf"/>
</dbReference>
<dbReference type="PANTHER" id="PTHR46696">
    <property type="entry name" value="P450, PUTATIVE (EUROFUNG)-RELATED"/>
    <property type="match status" value="1"/>
</dbReference>
<dbReference type="PANTHER" id="PTHR46696:SF6">
    <property type="entry name" value="P450, PUTATIVE (EUROFUNG)-RELATED"/>
    <property type="match status" value="1"/>
</dbReference>
<dbReference type="Pfam" id="PF00067">
    <property type="entry name" value="p450"/>
    <property type="match status" value="1"/>
</dbReference>
<dbReference type="PRINTS" id="PR00359">
    <property type="entry name" value="BP450"/>
</dbReference>
<dbReference type="PRINTS" id="PR00385">
    <property type="entry name" value="P450"/>
</dbReference>
<dbReference type="SUPFAM" id="SSF48264">
    <property type="entry name" value="Cytochrome P450"/>
    <property type="match status" value="1"/>
</dbReference>
<dbReference type="PROSITE" id="PS00086">
    <property type="entry name" value="CYTOCHROME_P450"/>
    <property type="match status" value="1"/>
</dbReference>
<name>CPXA_PSEPU</name>
<reference key="1">
    <citation type="journal article" date="1986" name="J. Biol. Chem.">
        <title>Nucleotide sequence of the Pseudomonas putida cytochrome P-450cam gene and its expression in Escherichia coli.</title>
        <authorList>
            <person name="Unger B.P."/>
            <person name="Gunsalus I.C."/>
            <person name="Sligar S.G."/>
        </authorList>
    </citation>
    <scope>NUCLEOTIDE SEQUENCE [GENOMIC DNA]</scope>
    <source>
        <strain>G1 / ATCC 17453</strain>
    </source>
</reference>
<reference key="2">
    <citation type="journal article" date="1989" name="J. Biochem.">
        <title>Cloning and nucleotide sequences of NADH-putidaredoxin reductase gene (camA) and putidaredoxin gene (camB) involved in cytochrome P-450cam hydroxylase of Pseudomonas putida.</title>
        <authorList>
            <person name="Koga H."/>
            <person name="Yamaguchi E."/>
            <person name="Matsunaga K."/>
            <person name="Aramaki H."/>
            <person name="Horiuchi T."/>
        </authorList>
    </citation>
    <scope>NUCLEOTIDE SEQUENCE [GENOMIC DNA] OF 386-415</scope>
    <source>
        <strain>G1 / ATCC 17453</strain>
    </source>
</reference>
<reference key="3">
    <citation type="journal article" date="1982" name="J. Biol. Chem.">
        <title>Amino acid sequence of the Pseudomonas putida cytochrome P-450. II. Cyanogen bromide peptides, acid cleavage peptides, and the complete sequence.</title>
        <authorList>
            <person name="Haniu M."/>
            <person name="Armes L.G."/>
            <person name="Yasunobu K.T."/>
            <person name="Shastry B.A."/>
            <person name="Gunsalus I.C."/>
        </authorList>
    </citation>
    <scope>PROTEIN SEQUENCE OF 2-415</scope>
</reference>
<reference key="4">
    <citation type="journal article" date="1987" name="Arch. Biochem. Biophys.">
        <title>P-450 binding to substrates camphor and linalool versus pressure.</title>
        <authorList>
            <person name="Marden M.C."/>
            <person name="Hui Bon Hoa G."/>
        </authorList>
    </citation>
    <scope>ABSORPTION SPECTROSCOPY</scope>
</reference>
<reference key="5">
    <citation type="journal article" date="1987" name="Studia Biophys.">
        <title>Dynamic behavior of the active site structure in bacterial cytochrome P-450.</title>
        <authorList>
            <person name="Jung C."/>
            <person name="Marlow F."/>
        </authorList>
    </citation>
    <scope>FOURIER-TRANSFORM INFRARED SPECTROSCOPY</scope>
</reference>
<reference key="6">
    <citation type="journal article" date="1989" name="Biochemistry">
        <title>Conformational changes of cytochromes P-450cam and P-450lin induced by high pressure.</title>
        <authorList>
            <person name="Hui Bon Hoa G."/>
            <person name="Di Primo C."/>
            <person name="Dondaine I."/>
            <person name="Sligar S.G."/>
            <person name="Gunsalus I.C."/>
            <person name="Douzou P."/>
        </authorList>
    </citation>
    <scope>ABSORPTION SPECTROSCOPY</scope>
    <scope>FLUORESCENCE SPECTROSCOPY</scope>
</reference>
<reference key="7">
    <citation type="journal article" date="1992" name="Biochim. Biophys. Acta">
        <title>Multichannel circular dichroism investigations of the structural stability of bacterial cytochrome P-450.</title>
        <authorList>
            <person name="Nolting B."/>
            <person name="Jung C."/>
            <person name="Snatzke G."/>
        </authorList>
    </citation>
    <scope>CIRCULAR DICHROISM ANALYSIS</scope>
</reference>
<reference key="8">
    <citation type="journal article" date="2002" name="J. Inorg. Biochem.">
        <title>Specific and non-specific effects of potassium cations on substrate-protein interactions in cytochromes P450cam and P450lin.</title>
        <authorList>
            <person name="Deprez E."/>
            <person name="Gill E."/>
            <person name="Helms V."/>
            <person name="Wade R."/>
            <person name="Hui Bon Hoa G."/>
        </authorList>
    </citation>
    <scope>SUBSTRATE-PROTEIN INTERACTION</scope>
</reference>
<reference key="9">
    <citation type="journal article" date="1985" name="J. Biol. Chem.">
        <title>The 2.6-A crystal structure of Pseudomonas putida cytochrome P-450.</title>
        <authorList>
            <person name="Poulos T.L."/>
            <person name="Finzel B.C."/>
            <person name="Gunsalus I.C."/>
            <person name="Wagner G.C."/>
            <person name="Kraut J."/>
        </authorList>
    </citation>
    <scope>X-RAY CRYSTALLOGRAPHY (2.0 ANGSTROMS)</scope>
</reference>
<reference key="10">
    <citation type="journal article" date="1997" name="FEBS Lett.">
        <title>Crystal structure of cytochrome P-450cam complexed with the (1S)-camphor enantiomer.</title>
        <authorList>
            <person name="Schlichting I."/>
            <person name="Jung C."/>
            <person name="Schulze H."/>
        </authorList>
    </citation>
    <scope>X-RAY CRYSTALLOGRAPHY (1.8 ANGSTROMS)</scope>
</reference>
<reference key="11">
    <citation type="journal article" date="1998" name="J. Am. Chem. Soc.">
        <title>Covalent attachment of an electroactive sulfydryl reagent in the active site of cytochrome P450cam as revealed by the crystal structure of the modified protein.</title>
        <authorList>
            <person name="Di Gleria K."/>
            <person name="Nickerson D.P."/>
            <person name="Hill H.A.O."/>
            <person name="Wong L.-L."/>
            <person name="Fueloep V."/>
        </authorList>
    </citation>
    <scope>X-RAY CRYSTALLOGRAPHY (2.2 ANGSTROMS)</scope>
</reference>
<reference key="12">
    <citation type="journal article" date="1998" name="Biochemistry">
        <title>Understanding the role of the essential Asp251 in cytochrome p450cam using site-directed mutagenesis, crystallography, and kinetic solvent isotope effect.</title>
        <authorList>
            <person name="Vidakovic M."/>
            <person name="Sligar S.G."/>
            <person name="Li H."/>
            <person name="Poulos T.L."/>
        </authorList>
    </citation>
    <scope>X-RAY CRYSTALLOGRAPHY (1.9 ANGSTROMS)</scope>
</reference>
<reference key="13">
    <citation type="journal article" date="1999" name="Proc. Natl. Acad. Sci. U.S.A.">
        <title>Optical detection of cytochrome P450 by sensitizer-linked substrates.</title>
        <authorList>
            <person name="Dmochowski I.J."/>
            <person name="Crane B.R."/>
            <person name="Wilker J.J."/>
            <person name="Winkler J.R."/>
            <person name="Gray H.B."/>
        </authorList>
    </citation>
    <scope>X-RAY CRYSTALLOGRAPHY (1.55 ANGSTROMS)</scope>
</reference>
<reference key="14">
    <citation type="journal article" date="2000" name="Science">
        <title>The catalytic pathway of cytochrome p450cam at atomic resolution.</title>
        <authorList>
            <person name="Schlichting I."/>
            <person name="Berendzen J."/>
            <person name="Chu K."/>
            <person name="Stock A.M."/>
            <person name="Maves S.A."/>
            <person name="Benson D.E."/>
            <person name="Sweet R.M."/>
            <person name="Ringe D."/>
            <person name="Petsko G.A."/>
            <person name="Sligar S.G."/>
        </authorList>
    </citation>
    <scope>X-RAY CRYSTALLOGRAPHY (1.9 ANGSTROMS)</scope>
</reference>
<reference key="15">
    <citation type="journal article" date="2000" name="J. Biochem.">
        <title>X-ray crystal structure and catalytic properties of Thr252Ile mutant of cytochrome P450cam: roles of Thr252 and water in the active center.</title>
        <authorList>
            <person name="Hishiki T."/>
            <person name="Shimada H."/>
            <person name="Nagano S."/>
            <person name="Egawa T."/>
            <person name="Kanamori Y."/>
            <person name="Makino R."/>
            <person name="Park S.-Y."/>
            <person name="Adachi S."/>
            <person name="Shiro Y."/>
            <person name="Ishimura Y."/>
        </authorList>
    </citation>
    <scope>X-RAY CRYSTALLOGRAPHY (2.03 ANGSTROMS)</scope>
</reference>
<reference key="16">
    <citation type="journal article" date="2001" name="Biochemistry">
        <title>Structural characterization of n-butyl-isocyanide complexes of cytochromes P450nor and P450cam.</title>
        <authorList>
            <person name="Lee D.-S."/>
            <person name="Park S.-Y."/>
            <person name="Yamane K."/>
            <person name="Obayashi E."/>
            <person name="Hori H."/>
            <person name="Shiro Y."/>
        </authorList>
    </citation>
    <scope>X-RAY CRYSTALLOGRAPHY (1.7 ANGSTROMS)</scope>
</reference>
<reference key="17">
    <citation type="journal article" date="2001" name="Proc. Natl. Acad. Sci. U.S.A.">
        <title>Probing the open state of cytochrome P450cam with ruthenium-linker substrates.</title>
        <authorList>
            <person name="Dunn A.R."/>
            <person name="Dmochowski I.J."/>
            <person name="Bilwes A.M."/>
            <person name="Gray H.B."/>
            <person name="Crane B.R."/>
        </authorList>
    </citation>
    <scope>X-RAY CRYSTALLOGRAPHY (1.65 ANGSTROMS)</scope>
</reference>
<reference key="18">
    <citation type="journal article" date="2003" name="Arch. Biochem. Biophys.">
        <title>Crystal structures of cyanide complexes of P450cam and the oxygenase domain of inducible nitric oxide synthase -- structural models of the short-lived oxygen complexes.</title>
        <authorList>
            <person name="Fedorov R."/>
            <person name="Ghosh D.K."/>
            <person name="Schlichting I."/>
        </authorList>
    </citation>
    <scope>X-RAY CRYSTALLOGRAPHY (1.8 ANGSTROMS)</scope>
</reference>
<reference key="19">
    <citation type="journal article" date="1997" name="FEBS Lett.">
        <title>1H-NMR study of diamagnetic cytochrome P450cam: assignment of heme resonances and substrate dependance of one cysteinate beta proton.</title>
        <authorList>
            <person name="Mouro C."/>
            <person name="Bondon A."/>
            <person name="Simmoneaux G."/>
            <person name="Jung C."/>
        </authorList>
    </citation>
    <scope>STRUCTURE BY NMR</scope>
</reference>
<accession>P00183</accession>
<protein>
    <recommendedName>
        <fullName>Camphor 5-monooxygenase</fullName>
        <ecNumber>1.14.15.1</ecNumber>
    </recommendedName>
    <alternativeName>
        <fullName>Cytochrome P450-cam</fullName>
        <shortName>Cytochrome P450cam</shortName>
    </alternativeName>
</protein>
<organism>
    <name type="scientific">Pseudomonas putida</name>
    <name type="common">Arthrobacter siderocapsulatus</name>
    <dbReference type="NCBI Taxonomy" id="303"/>
    <lineage>
        <taxon>Bacteria</taxon>
        <taxon>Pseudomonadati</taxon>
        <taxon>Pseudomonadota</taxon>
        <taxon>Gammaproteobacteria</taxon>
        <taxon>Pseudomonadales</taxon>
        <taxon>Pseudomonadaceae</taxon>
        <taxon>Pseudomonas</taxon>
    </lineage>
</organism>
<feature type="initiator methionine" description="Removed" evidence="2">
    <location>
        <position position="1"/>
    </location>
</feature>
<feature type="chain" id="PRO_0000052204" description="Camphor 5-monooxygenase">
    <location>
        <begin position="2"/>
        <end position="415"/>
    </location>
</feature>
<feature type="binding site" description="axial binding residue">
    <location>
        <position position="358"/>
    </location>
    <ligand>
        <name>heme</name>
        <dbReference type="ChEBI" id="CHEBI:30413"/>
    </ligand>
    <ligandPart>
        <name>Fe</name>
        <dbReference type="ChEBI" id="CHEBI:18248"/>
    </ligandPart>
</feature>
<feature type="sequence conflict" description="In Ref. 3; AA sequence." evidence="3" ref="3">
    <location>
        <begin position="56"/>
        <end position="57"/>
    </location>
</feature>
<feature type="sequence conflict" description="In Ref. 3; AA sequence." evidence="3" ref="3">
    <original>E</original>
    <variation>Q</variation>
    <location>
        <position position="277"/>
    </location>
</feature>
<feature type="sequence conflict" description="In Ref. 3; AA sequence." evidence="3" ref="3">
    <original>H</original>
    <variation>S</variation>
    <location>
        <position position="362"/>
    </location>
</feature>
<feature type="sequence conflict" description="In Ref. 3; AA sequence." evidence="3" ref="3">
    <original>D</original>
    <variation>N</variation>
    <location>
        <position position="408"/>
    </location>
</feature>
<feature type="turn" evidence="9">
    <location>
        <begin position="6"/>
        <end position="8"/>
    </location>
</feature>
<feature type="helix" evidence="10">
    <location>
        <begin position="21"/>
        <end position="23"/>
    </location>
</feature>
<feature type="strand" evidence="7">
    <location>
        <begin position="29"/>
        <end position="31"/>
    </location>
</feature>
<feature type="helix" evidence="10">
    <location>
        <begin position="35"/>
        <end position="37"/>
    </location>
</feature>
<feature type="helix" evidence="10">
    <location>
        <begin position="39"/>
        <end position="43"/>
    </location>
</feature>
<feature type="helix" evidence="10">
    <location>
        <begin position="44"/>
        <end position="47"/>
    </location>
</feature>
<feature type="strand" evidence="5">
    <location>
        <begin position="48"/>
        <end position="51"/>
    </location>
</feature>
<feature type="strand" evidence="10">
    <location>
        <begin position="53"/>
        <end position="57"/>
    </location>
</feature>
<feature type="helix" evidence="10">
    <location>
        <begin position="59"/>
        <end position="61"/>
    </location>
</feature>
<feature type="strand" evidence="10">
    <location>
        <begin position="63"/>
        <end position="66"/>
    </location>
</feature>
<feature type="helix" evidence="10">
    <location>
        <begin position="69"/>
        <end position="77"/>
    </location>
</feature>
<feature type="turn" evidence="10">
    <location>
        <begin position="79"/>
        <end position="81"/>
    </location>
</feature>
<feature type="strand" evidence="4">
    <location>
        <begin position="82"/>
        <end position="86"/>
    </location>
</feature>
<feature type="strand" evidence="10">
    <location>
        <begin position="88"/>
        <end position="90"/>
    </location>
</feature>
<feature type="helix" evidence="10">
    <location>
        <begin position="91"/>
        <end position="96"/>
    </location>
</feature>
<feature type="turn" evidence="10">
    <location>
        <begin position="100"/>
        <end position="103"/>
    </location>
</feature>
<feature type="turn" evidence="10">
    <location>
        <begin position="106"/>
        <end position="108"/>
    </location>
</feature>
<feature type="helix" evidence="10">
    <location>
        <begin position="109"/>
        <end position="120"/>
    </location>
</feature>
<feature type="helix" evidence="10">
    <location>
        <begin position="122"/>
        <end position="143"/>
    </location>
</feature>
<feature type="helix" evidence="10">
    <location>
        <begin position="144"/>
        <end position="146"/>
    </location>
</feature>
<feature type="strand" evidence="10">
    <location>
        <begin position="147"/>
        <end position="150"/>
    </location>
</feature>
<feature type="helix" evidence="10">
    <location>
        <begin position="151"/>
        <end position="154"/>
    </location>
</feature>
<feature type="turn" evidence="10">
    <location>
        <begin position="155"/>
        <end position="157"/>
    </location>
</feature>
<feature type="helix" evidence="10">
    <location>
        <begin position="158"/>
        <end position="168"/>
    </location>
</feature>
<feature type="helix" evidence="10">
    <location>
        <begin position="172"/>
        <end position="174"/>
    </location>
</feature>
<feature type="helix" evidence="10">
    <location>
        <begin position="175"/>
        <end position="186"/>
    </location>
</feature>
<feature type="strand" evidence="10">
    <location>
        <begin position="190"/>
        <end position="192"/>
    </location>
</feature>
<feature type="helix" evidence="10">
    <location>
        <begin position="194"/>
        <end position="214"/>
    </location>
</feature>
<feature type="helix" evidence="10">
    <location>
        <begin position="220"/>
        <end position="225"/>
    </location>
</feature>
<feature type="strand" evidence="6">
    <location>
        <begin position="230"/>
        <end position="233"/>
    </location>
</feature>
<feature type="helix" evidence="10">
    <location>
        <begin position="236"/>
        <end position="251"/>
    </location>
</feature>
<feature type="helix" evidence="10">
    <location>
        <begin position="253"/>
        <end position="266"/>
    </location>
</feature>
<feature type="helix" evidence="10">
    <location>
        <begin position="269"/>
        <end position="277"/>
    </location>
</feature>
<feature type="helix" evidence="10">
    <location>
        <begin position="279"/>
        <end position="281"/>
    </location>
</feature>
<feature type="helix" evidence="10">
    <location>
        <begin position="282"/>
        <end position="292"/>
    </location>
</feature>
<feature type="strand" evidence="10">
    <location>
        <begin position="298"/>
        <end position="304"/>
    </location>
</feature>
<feature type="strand" evidence="10">
    <location>
        <begin position="306"/>
        <end position="308"/>
    </location>
</feature>
<feature type="strand" evidence="10">
    <location>
        <begin position="311"/>
        <end position="313"/>
    </location>
</feature>
<feature type="strand" evidence="10">
    <location>
        <begin position="318"/>
        <end position="321"/>
    </location>
</feature>
<feature type="helix" evidence="10">
    <location>
        <begin position="323"/>
        <end position="328"/>
    </location>
</feature>
<feature type="turn" evidence="10">
    <location>
        <begin position="330"/>
        <end position="332"/>
    </location>
</feature>
<feature type="strand" evidence="10">
    <location>
        <begin position="333"/>
        <end position="335"/>
    </location>
</feature>
<feature type="helix" evidence="10">
    <location>
        <begin position="354"/>
        <end position="356"/>
    </location>
</feature>
<feature type="helix" evidence="10">
    <location>
        <begin position="361"/>
        <end position="378"/>
    </location>
</feature>
<feature type="strand" evidence="8">
    <location>
        <begin position="382"/>
        <end position="384"/>
    </location>
</feature>
<feature type="strand" evidence="10">
    <location>
        <begin position="395"/>
        <end position="397"/>
    </location>
</feature>
<feature type="strand" evidence="10">
    <location>
        <begin position="399"/>
        <end position="401"/>
    </location>
</feature>
<feature type="strand" evidence="10">
    <location>
        <begin position="404"/>
        <end position="406"/>
    </location>
</feature>
<feature type="helix" evidence="10">
    <location>
        <begin position="409"/>
        <end position="411"/>
    </location>
</feature>
<evidence type="ECO:0000250" key="1"/>
<evidence type="ECO:0000269" key="2">
    <source>
    </source>
</evidence>
<evidence type="ECO:0000305" key="3"/>
<evidence type="ECO:0007829" key="4">
    <source>
        <dbReference type="PDB" id="1GEK"/>
    </source>
</evidence>
<evidence type="ECO:0007829" key="5">
    <source>
        <dbReference type="PDB" id="1O76"/>
    </source>
</evidence>
<evidence type="ECO:0007829" key="6">
    <source>
        <dbReference type="PDB" id="2H7R"/>
    </source>
</evidence>
<evidence type="ECO:0007829" key="7">
    <source>
        <dbReference type="PDB" id="2H7S"/>
    </source>
</evidence>
<evidence type="ECO:0007829" key="8">
    <source>
        <dbReference type="PDB" id="3CP4"/>
    </source>
</evidence>
<evidence type="ECO:0007829" key="9">
    <source>
        <dbReference type="PDB" id="4KKY"/>
    </source>
</evidence>
<evidence type="ECO:0007829" key="10">
    <source>
        <dbReference type="PDB" id="4L4E"/>
    </source>
</evidence>
<comment type="function">
    <text>Involved in a camphor oxidation system.</text>
</comment>
<comment type="catalytic activity">
    <reaction>
        <text>2 reduced [2Fe-2S]-[putidaredoxin] + (1R,4R)-camphor + O2 + 2 H(+) = (1R,4R,5R)-5-hydroxycamphor + 2 oxidized [2Fe-2S]-[putidaredoxin] + H2O</text>
        <dbReference type="Rhea" id="RHEA:13525"/>
        <dbReference type="Rhea" id="RHEA-COMP:14157"/>
        <dbReference type="Rhea" id="RHEA-COMP:14158"/>
        <dbReference type="ChEBI" id="CHEBI:15377"/>
        <dbReference type="ChEBI" id="CHEBI:15378"/>
        <dbReference type="ChEBI" id="CHEBI:15379"/>
        <dbReference type="ChEBI" id="CHEBI:15396"/>
        <dbReference type="ChEBI" id="CHEBI:15398"/>
        <dbReference type="ChEBI" id="CHEBI:33737"/>
        <dbReference type="ChEBI" id="CHEBI:33738"/>
        <dbReference type="EC" id="1.14.15.1"/>
    </reaction>
</comment>
<comment type="cofactor">
    <cofactor>
        <name>heme</name>
        <dbReference type="ChEBI" id="CHEBI:30413"/>
    </cofactor>
</comment>
<comment type="pathway">
    <text>Terpene metabolism; (R)-camphor degradation.</text>
</comment>
<comment type="interaction">
    <interactant intactId="EBI-15706256">
        <id>P00183</id>
    </interactant>
    <interactant intactId="EBI-15706395">
        <id>P00259</id>
        <label>camB</label>
    </interactant>
    <organismsDiffer>false</organismsDiffer>
    <experiments>3</experiments>
</comment>
<comment type="subcellular location">
    <subcellularLocation>
        <location evidence="1">Cytoplasm</location>
    </subcellularLocation>
</comment>
<comment type="similarity">
    <text evidence="3">Belongs to the cytochrome P450 family.</text>
</comment>
<proteinExistence type="evidence at protein level"/>
<gene>
    <name type="primary">camC</name>
    <name type="synonym">cyp101</name>
</gene>